<feature type="chain" id="PRO_1000125503" description="Sulfate transporter CysZ">
    <location>
        <begin position="1"/>
        <end position="253"/>
    </location>
</feature>
<feature type="transmembrane region" description="Helical" evidence="1">
    <location>
        <begin position="31"/>
        <end position="51"/>
    </location>
</feature>
<feature type="transmembrane region" description="Helical" evidence="1">
    <location>
        <begin position="72"/>
        <end position="92"/>
    </location>
</feature>
<feature type="transmembrane region" description="Helical" evidence="1">
    <location>
        <begin position="151"/>
        <end position="171"/>
    </location>
</feature>
<feature type="transmembrane region" description="Helical" evidence="1">
    <location>
        <begin position="222"/>
        <end position="242"/>
    </location>
</feature>
<evidence type="ECO:0000255" key="1">
    <source>
        <dbReference type="HAMAP-Rule" id="MF_00468"/>
    </source>
</evidence>
<proteinExistence type="inferred from homology"/>
<accession>B5RCQ1</accession>
<protein>
    <recommendedName>
        <fullName evidence="1">Sulfate transporter CysZ</fullName>
    </recommendedName>
</protein>
<name>CYSZ_SALG2</name>
<keyword id="KW-0028">Amino-acid biosynthesis</keyword>
<keyword id="KW-0997">Cell inner membrane</keyword>
<keyword id="KW-1003">Cell membrane</keyword>
<keyword id="KW-0198">Cysteine biosynthesis</keyword>
<keyword id="KW-0472">Membrane</keyword>
<keyword id="KW-0764">Sulfate transport</keyword>
<keyword id="KW-0812">Transmembrane</keyword>
<keyword id="KW-1133">Transmembrane helix</keyword>
<keyword id="KW-0813">Transport</keyword>
<sequence length="253" mass="28893">MVSSSTTVPRSGVYYFSQGWKLVTLPGIRRFVILPLLVNIVLMGGAFWWLFTQLDAWIPSLMSHVPDWLQWLSYLLWPIAVISVLLVFGYFFSTLANWIAAPFNGLLAEQLEARLTGATPPDTGILGIMKDVPRIMKREWQKLAWYLPRAIVLLVLYFIPGIGQTIAPVLWFLFSAWMLAIQYCDYPFDNHKVPFKTMRAALRTQKVANMQFGALTSLFTMIPVLNLFIMPVAVCGATAMWVDCWRAKHALWK</sequence>
<reference key="1">
    <citation type="journal article" date="2008" name="Genome Res.">
        <title>Comparative genome analysis of Salmonella enteritidis PT4 and Salmonella gallinarum 287/91 provides insights into evolutionary and host adaptation pathways.</title>
        <authorList>
            <person name="Thomson N.R."/>
            <person name="Clayton D.J."/>
            <person name="Windhorst D."/>
            <person name="Vernikos G."/>
            <person name="Davidson S."/>
            <person name="Churcher C."/>
            <person name="Quail M.A."/>
            <person name="Stevens M."/>
            <person name="Jones M.A."/>
            <person name="Watson M."/>
            <person name="Barron A."/>
            <person name="Layton A."/>
            <person name="Pickard D."/>
            <person name="Kingsley R.A."/>
            <person name="Bignell A."/>
            <person name="Clark L."/>
            <person name="Harris B."/>
            <person name="Ormond D."/>
            <person name="Abdellah Z."/>
            <person name="Brooks K."/>
            <person name="Cherevach I."/>
            <person name="Chillingworth T."/>
            <person name="Woodward J."/>
            <person name="Norberczak H."/>
            <person name="Lord A."/>
            <person name="Arrowsmith C."/>
            <person name="Jagels K."/>
            <person name="Moule S."/>
            <person name="Mungall K."/>
            <person name="Saunders M."/>
            <person name="Whitehead S."/>
            <person name="Chabalgoity J.A."/>
            <person name="Maskell D."/>
            <person name="Humphreys T."/>
            <person name="Roberts M."/>
            <person name="Barrow P.A."/>
            <person name="Dougan G."/>
            <person name="Parkhill J."/>
        </authorList>
    </citation>
    <scope>NUCLEOTIDE SEQUENCE [LARGE SCALE GENOMIC DNA]</scope>
    <source>
        <strain>287/91 / NCTC 13346</strain>
    </source>
</reference>
<comment type="function">
    <text evidence="1">High affinity, high specificity proton-dependent sulfate transporter, which mediates sulfate uptake. Provides the sulfur source for the cysteine synthesis pathway.</text>
</comment>
<comment type="subcellular location">
    <subcellularLocation>
        <location evidence="1">Cell inner membrane</location>
        <topology evidence="1">Multi-pass membrane protein</topology>
    </subcellularLocation>
</comment>
<comment type="similarity">
    <text evidence="1">Belongs to the CysZ family.</text>
</comment>
<dbReference type="EMBL" id="AM933173">
    <property type="protein sequence ID" value="CAR38287.1"/>
    <property type="molecule type" value="Genomic_DNA"/>
</dbReference>
<dbReference type="RefSeq" id="WP_000255008.1">
    <property type="nucleotide sequence ID" value="NC_011274.1"/>
</dbReference>
<dbReference type="SMR" id="B5RCQ1"/>
<dbReference type="KEGG" id="seg:SG2461"/>
<dbReference type="HOGENOM" id="CLU_070331_1_0_6"/>
<dbReference type="Proteomes" id="UP000008321">
    <property type="component" value="Chromosome"/>
</dbReference>
<dbReference type="GO" id="GO:0005886">
    <property type="term" value="C:plasma membrane"/>
    <property type="evidence" value="ECO:0007669"/>
    <property type="project" value="UniProtKB-SubCell"/>
</dbReference>
<dbReference type="GO" id="GO:0009675">
    <property type="term" value="F:high-affinity sulfate:proton symporter activity"/>
    <property type="evidence" value="ECO:0007669"/>
    <property type="project" value="TreeGrafter"/>
</dbReference>
<dbReference type="GO" id="GO:0019344">
    <property type="term" value="P:cysteine biosynthetic process"/>
    <property type="evidence" value="ECO:0007669"/>
    <property type="project" value="UniProtKB-UniRule"/>
</dbReference>
<dbReference type="GO" id="GO:0000103">
    <property type="term" value="P:sulfate assimilation"/>
    <property type="evidence" value="ECO:0007669"/>
    <property type="project" value="InterPro"/>
</dbReference>
<dbReference type="HAMAP" id="MF_00468">
    <property type="entry name" value="CysZ"/>
    <property type="match status" value="1"/>
</dbReference>
<dbReference type="InterPro" id="IPR050480">
    <property type="entry name" value="CysZ_sulfate_transptr"/>
</dbReference>
<dbReference type="InterPro" id="IPR022985">
    <property type="entry name" value="Sulfate_CysZ"/>
</dbReference>
<dbReference type="NCBIfam" id="NF003433">
    <property type="entry name" value="PRK04949.1"/>
    <property type="match status" value="1"/>
</dbReference>
<dbReference type="PANTHER" id="PTHR37468">
    <property type="entry name" value="SULFATE TRANSPORTER CYSZ"/>
    <property type="match status" value="1"/>
</dbReference>
<dbReference type="PANTHER" id="PTHR37468:SF1">
    <property type="entry name" value="SULFATE TRANSPORTER CYSZ"/>
    <property type="match status" value="1"/>
</dbReference>
<dbReference type="Pfam" id="PF07264">
    <property type="entry name" value="EI24"/>
    <property type="match status" value="1"/>
</dbReference>
<gene>
    <name evidence="1" type="primary">cysZ</name>
    <name type="ordered locus">SG2461</name>
</gene>
<organism>
    <name type="scientific">Salmonella gallinarum (strain 287/91 / NCTC 13346)</name>
    <dbReference type="NCBI Taxonomy" id="550538"/>
    <lineage>
        <taxon>Bacteria</taxon>
        <taxon>Pseudomonadati</taxon>
        <taxon>Pseudomonadota</taxon>
        <taxon>Gammaproteobacteria</taxon>
        <taxon>Enterobacterales</taxon>
        <taxon>Enterobacteriaceae</taxon>
        <taxon>Salmonella</taxon>
    </lineage>
</organism>